<reference key="1">
    <citation type="journal article" date="1996" name="Mol. Phylogenet. Evol.">
        <title>Phylogenetic inferences from chloroplast chlB gene sequences of Nephrolepis exaltata (Filicopsida), Ephedra altissima (Gnetopsida), and diverse land plants.</title>
        <authorList>
            <person name="Boivin R."/>
            <person name="Richard M."/>
            <person name="Beauseigle D."/>
            <person name="Bousquet J."/>
            <person name="Bellemare G."/>
        </authorList>
    </citation>
    <scope>NUCLEOTIDE SEQUENCE [GENOMIC DNA]</scope>
</reference>
<proteinExistence type="inferred from homology"/>
<gene>
    <name type="primary">chlB</name>
</gene>
<keyword id="KW-0004">4Fe-4S</keyword>
<keyword id="KW-0067">ATP-binding</keyword>
<keyword id="KW-0149">Chlorophyll biosynthesis</keyword>
<keyword id="KW-0150">Chloroplast</keyword>
<keyword id="KW-0408">Iron</keyword>
<keyword id="KW-0411">Iron-sulfur</keyword>
<keyword id="KW-0479">Metal-binding</keyword>
<keyword id="KW-0547">Nucleotide-binding</keyword>
<keyword id="KW-0560">Oxidoreductase</keyword>
<keyword id="KW-0602">Photosynthesis</keyword>
<keyword id="KW-0934">Plastid</keyword>
<name>CHLB_EQUSC</name>
<organism>
    <name type="scientific">Equisetum scirpoides</name>
    <name type="common">Dwarf-scouring rush</name>
    <name type="synonym">Hippochaete scirpoides</name>
    <dbReference type="NCBI Taxonomy" id="3261"/>
    <lineage>
        <taxon>Eukaryota</taxon>
        <taxon>Viridiplantae</taxon>
        <taxon>Streptophyta</taxon>
        <taxon>Embryophyta</taxon>
        <taxon>Tracheophyta</taxon>
        <taxon>Polypodiopsida</taxon>
        <taxon>Equisetidae</taxon>
        <taxon>Equisetales</taxon>
        <taxon>Equisetaceae</taxon>
        <taxon>Equisetum</taxon>
    </lineage>
</organism>
<evidence type="ECO:0000250" key="1"/>
<evidence type="ECO:0000305" key="2"/>
<accession>Q32214</accession>
<sequence>KRLLEDLGIKINEIIPEGASVKNLINLPQAWFNIVPYREVGLMTASFLQKDFGMPYILTTPMGIIDTADFIRQVQKNVNKLAPFFLKKTFDFESYIDYQTKFV</sequence>
<protein>
    <recommendedName>
        <fullName>Light-independent protochlorophyllide reductase subunit B</fullName>
        <shortName>DPOR subunit B</shortName>
        <shortName>LI-POR subunit B</shortName>
        <ecNumber>1.3.7.7</ecNumber>
    </recommendedName>
</protein>
<dbReference type="EC" id="1.3.7.7"/>
<dbReference type="EMBL" id="U21312">
    <property type="protein sequence ID" value="AAC49430.1"/>
    <property type="molecule type" value="Genomic_DNA"/>
</dbReference>
<dbReference type="SMR" id="Q32214"/>
<dbReference type="UniPathway" id="UPA00670"/>
<dbReference type="GO" id="GO:0009507">
    <property type="term" value="C:chloroplast"/>
    <property type="evidence" value="ECO:0007669"/>
    <property type="project" value="UniProtKB-SubCell"/>
</dbReference>
<dbReference type="GO" id="GO:0051539">
    <property type="term" value="F:4 iron, 4 sulfur cluster binding"/>
    <property type="evidence" value="ECO:0007669"/>
    <property type="project" value="UniProtKB-KW"/>
</dbReference>
<dbReference type="GO" id="GO:0005524">
    <property type="term" value="F:ATP binding"/>
    <property type="evidence" value="ECO:0007669"/>
    <property type="project" value="UniProtKB-KW"/>
</dbReference>
<dbReference type="GO" id="GO:0046872">
    <property type="term" value="F:metal ion binding"/>
    <property type="evidence" value="ECO:0007669"/>
    <property type="project" value="UniProtKB-KW"/>
</dbReference>
<dbReference type="GO" id="GO:0016491">
    <property type="term" value="F:oxidoreductase activity"/>
    <property type="evidence" value="ECO:0007669"/>
    <property type="project" value="UniProtKB-KW"/>
</dbReference>
<dbReference type="GO" id="GO:0036068">
    <property type="term" value="P:light-independent chlorophyll biosynthetic process"/>
    <property type="evidence" value="ECO:0007669"/>
    <property type="project" value="UniProtKB-UniPathway"/>
</dbReference>
<dbReference type="GO" id="GO:0015979">
    <property type="term" value="P:photosynthesis"/>
    <property type="evidence" value="ECO:0007669"/>
    <property type="project" value="UniProtKB-KW"/>
</dbReference>
<dbReference type="Gene3D" id="3.40.50.1980">
    <property type="entry name" value="Nitrogenase molybdenum iron protein domain"/>
    <property type="match status" value="1"/>
</dbReference>
<dbReference type="InterPro" id="IPR050152">
    <property type="entry name" value="ChlB/BchB/BchZ"/>
</dbReference>
<dbReference type="InterPro" id="IPR000510">
    <property type="entry name" value="Nase/OxRdtase_comp1"/>
</dbReference>
<dbReference type="PANTHER" id="PTHR33712">
    <property type="entry name" value="LIGHT-INDEPENDENT PROTOCHLOROPHYLLIDE REDUCTASE SUBUNIT B"/>
    <property type="match status" value="1"/>
</dbReference>
<dbReference type="PANTHER" id="PTHR33712:SF7">
    <property type="entry name" value="LIGHT-INDEPENDENT PROTOCHLOROPHYLLIDE REDUCTASE SUBUNIT B"/>
    <property type="match status" value="1"/>
</dbReference>
<dbReference type="Pfam" id="PF00148">
    <property type="entry name" value="Oxidored_nitro"/>
    <property type="match status" value="1"/>
</dbReference>
<dbReference type="SUPFAM" id="SSF53807">
    <property type="entry name" value="Helical backbone' metal receptor"/>
    <property type="match status" value="1"/>
</dbReference>
<comment type="function">
    <text evidence="1">Component of the dark-operative protochlorophyllide reductase (DPOR) that uses Mg-ATP and reduced ferredoxin to reduce ring D of protochlorophyllide (Pchlide) to form chlorophyllide a (Chlide). This reaction is light-independent. The NB-protein (ChlN-ChlB) is the catalytic component of the complex (By similarity).</text>
</comment>
<comment type="catalytic activity">
    <reaction>
        <text>chlorophyllide a + oxidized 2[4Fe-4S]-[ferredoxin] + 2 ADP + 2 phosphate = protochlorophyllide a + reduced 2[4Fe-4S]-[ferredoxin] + 2 ATP + 2 H2O</text>
        <dbReference type="Rhea" id="RHEA:28202"/>
        <dbReference type="Rhea" id="RHEA-COMP:10002"/>
        <dbReference type="Rhea" id="RHEA-COMP:10004"/>
        <dbReference type="ChEBI" id="CHEBI:15377"/>
        <dbReference type="ChEBI" id="CHEBI:30616"/>
        <dbReference type="ChEBI" id="CHEBI:33722"/>
        <dbReference type="ChEBI" id="CHEBI:33723"/>
        <dbReference type="ChEBI" id="CHEBI:43474"/>
        <dbReference type="ChEBI" id="CHEBI:83348"/>
        <dbReference type="ChEBI" id="CHEBI:83350"/>
        <dbReference type="ChEBI" id="CHEBI:456216"/>
        <dbReference type="EC" id="1.3.7.7"/>
    </reaction>
</comment>
<comment type="cofactor">
    <cofactor evidence="1">
        <name>[4Fe-4S] cluster</name>
        <dbReference type="ChEBI" id="CHEBI:49883"/>
    </cofactor>
    <text evidence="1">Binds 1 [4Fe-4S] cluster per heterodimer. The cluster is bound at the heterodimer interface by residues from both subunits.</text>
</comment>
<comment type="pathway">
    <text>Porphyrin-containing compound metabolism; chlorophyll biosynthesis (light-independent).</text>
</comment>
<comment type="subunit">
    <text evidence="1">Protochlorophyllide reductase is composed of three subunits; ChlL, ChlN and ChlB. Forms a heterotetramer of two ChlB and two ChlN subunits (By similarity).</text>
</comment>
<comment type="subcellular location">
    <subcellularLocation>
        <location>Plastid</location>
        <location>Chloroplast</location>
    </subcellularLocation>
</comment>
<comment type="similarity">
    <text evidence="2">Belongs to the ChlB/BchB/BchZ family.</text>
</comment>
<geneLocation type="chloroplast"/>
<feature type="chain" id="PRO_0000219823" description="Light-independent protochlorophyllide reductase subunit B">
    <location>
        <begin position="1" status="less than"/>
        <end position="103" status="greater than"/>
    </location>
</feature>
<feature type="non-terminal residue">
    <location>
        <position position="1"/>
    </location>
</feature>
<feature type="non-terminal residue">
    <location>
        <position position="103"/>
    </location>
</feature>